<accession>Q48C77</accession>
<name>HIS7_PSE14</name>
<organism>
    <name type="scientific">Pseudomonas savastanoi pv. phaseolicola (strain 1448A / Race 6)</name>
    <name type="common">Pseudomonas syringae pv. phaseolicola (strain 1448A / Race 6)</name>
    <dbReference type="NCBI Taxonomy" id="264730"/>
    <lineage>
        <taxon>Bacteria</taxon>
        <taxon>Pseudomonadati</taxon>
        <taxon>Pseudomonadota</taxon>
        <taxon>Gammaproteobacteria</taxon>
        <taxon>Pseudomonadales</taxon>
        <taxon>Pseudomonadaceae</taxon>
        <taxon>Pseudomonas</taxon>
    </lineage>
</organism>
<reference key="1">
    <citation type="journal article" date="2005" name="J. Bacteriol.">
        <title>Whole-genome sequence analysis of Pseudomonas syringae pv. phaseolicola 1448A reveals divergence among pathovars in genes involved in virulence and transposition.</title>
        <authorList>
            <person name="Joardar V."/>
            <person name="Lindeberg M."/>
            <person name="Jackson R.W."/>
            <person name="Selengut J."/>
            <person name="Dodson R."/>
            <person name="Brinkac L.M."/>
            <person name="Daugherty S.C."/>
            <person name="DeBoy R.T."/>
            <person name="Durkin A.S."/>
            <person name="Gwinn Giglio M."/>
            <person name="Madupu R."/>
            <person name="Nelson W.C."/>
            <person name="Rosovitz M.J."/>
            <person name="Sullivan S.A."/>
            <person name="Crabtree J."/>
            <person name="Creasy T."/>
            <person name="Davidsen T.M."/>
            <person name="Haft D.H."/>
            <person name="Zafar N."/>
            <person name="Zhou L."/>
            <person name="Halpin R."/>
            <person name="Holley T."/>
            <person name="Khouri H.M."/>
            <person name="Feldblyum T.V."/>
            <person name="White O."/>
            <person name="Fraser C.M."/>
            <person name="Chatterjee A.K."/>
            <person name="Cartinhour S."/>
            <person name="Schneider D."/>
            <person name="Mansfield J.W."/>
            <person name="Collmer A."/>
            <person name="Buell R."/>
        </authorList>
    </citation>
    <scope>NUCLEOTIDE SEQUENCE [LARGE SCALE GENOMIC DNA]</scope>
    <source>
        <strain>1448A / Race 6</strain>
    </source>
</reference>
<gene>
    <name evidence="1" type="primary">hisB</name>
    <name type="ordered locus">PSPPH_4926</name>
</gene>
<dbReference type="EC" id="4.2.1.19" evidence="1"/>
<dbReference type="EMBL" id="CP000058">
    <property type="protein sequence ID" value="AAZ36573.1"/>
    <property type="molecule type" value="Genomic_DNA"/>
</dbReference>
<dbReference type="RefSeq" id="WP_002551454.1">
    <property type="nucleotide sequence ID" value="NC_005773.3"/>
</dbReference>
<dbReference type="SMR" id="Q48C77"/>
<dbReference type="GeneID" id="96221390"/>
<dbReference type="KEGG" id="psp:PSPPH_4926"/>
<dbReference type="eggNOG" id="COG0131">
    <property type="taxonomic scope" value="Bacteria"/>
</dbReference>
<dbReference type="HOGENOM" id="CLU_044308_3_0_6"/>
<dbReference type="UniPathway" id="UPA00031">
    <property type="reaction ID" value="UER00011"/>
</dbReference>
<dbReference type="Proteomes" id="UP000000551">
    <property type="component" value="Chromosome"/>
</dbReference>
<dbReference type="GO" id="GO:0005737">
    <property type="term" value="C:cytoplasm"/>
    <property type="evidence" value="ECO:0007669"/>
    <property type="project" value="UniProtKB-SubCell"/>
</dbReference>
<dbReference type="GO" id="GO:0004424">
    <property type="term" value="F:imidazoleglycerol-phosphate dehydratase activity"/>
    <property type="evidence" value="ECO:0007669"/>
    <property type="project" value="UniProtKB-UniRule"/>
</dbReference>
<dbReference type="GO" id="GO:0000105">
    <property type="term" value="P:L-histidine biosynthetic process"/>
    <property type="evidence" value="ECO:0007669"/>
    <property type="project" value="UniProtKB-UniRule"/>
</dbReference>
<dbReference type="CDD" id="cd07914">
    <property type="entry name" value="IGPD"/>
    <property type="match status" value="1"/>
</dbReference>
<dbReference type="FunFam" id="3.30.230.40:FF:000002">
    <property type="entry name" value="Imidazoleglycerol-phosphate dehydratase"/>
    <property type="match status" value="1"/>
</dbReference>
<dbReference type="FunFam" id="3.30.230.40:FF:000003">
    <property type="entry name" value="Imidazoleglycerol-phosphate dehydratase HisB"/>
    <property type="match status" value="1"/>
</dbReference>
<dbReference type="Gene3D" id="3.30.230.40">
    <property type="entry name" value="Imidazole glycerol phosphate dehydratase, domain 1"/>
    <property type="match status" value="2"/>
</dbReference>
<dbReference type="HAMAP" id="MF_00076">
    <property type="entry name" value="HisB"/>
    <property type="match status" value="1"/>
</dbReference>
<dbReference type="InterPro" id="IPR038494">
    <property type="entry name" value="IGPD_sf"/>
</dbReference>
<dbReference type="InterPro" id="IPR000807">
    <property type="entry name" value="ImidazoleglycerolP_deHydtase"/>
</dbReference>
<dbReference type="InterPro" id="IPR020565">
    <property type="entry name" value="ImidazoleglycerP_deHydtase_CS"/>
</dbReference>
<dbReference type="InterPro" id="IPR020568">
    <property type="entry name" value="Ribosomal_Su5_D2-typ_SF"/>
</dbReference>
<dbReference type="NCBIfam" id="NF002106">
    <property type="entry name" value="PRK00951.1-1"/>
    <property type="match status" value="1"/>
</dbReference>
<dbReference type="NCBIfam" id="NF002111">
    <property type="entry name" value="PRK00951.2-1"/>
    <property type="match status" value="1"/>
</dbReference>
<dbReference type="NCBIfam" id="NF002114">
    <property type="entry name" value="PRK00951.2-4"/>
    <property type="match status" value="1"/>
</dbReference>
<dbReference type="PANTHER" id="PTHR23133:SF2">
    <property type="entry name" value="IMIDAZOLEGLYCEROL-PHOSPHATE DEHYDRATASE"/>
    <property type="match status" value="1"/>
</dbReference>
<dbReference type="PANTHER" id="PTHR23133">
    <property type="entry name" value="IMIDAZOLEGLYCEROL-PHOSPHATE DEHYDRATASE HIS7"/>
    <property type="match status" value="1"/>
</dbReference>
<dbReference type="Pfam" id="PF00475">
    <property type="entry name" value="IGPD"/>
    <property type="match status" value="1"/>
</dbReference>
<dbReference type="SUPFAM" id="SSF54211">
    <property type="entry name" value="Ribosomal protein S5 domain 2-like"/>
    <property type="match status" value="2"/>
</dbReference>
<dbReference type="PROSITE" id="PS00954">
    <property type="entry name" value="IGP_DEHYDRATASE_1"/>
    <property type="match status" value="1"/>
</dbReference>
<dbReference type="PROSITE" id="PS00955">
    <property type="entry name" value="IGP_DEHYDRATASE_2"/>
    <property type="match status" value="1"/>
</dbReference>
<feature type="chain" id="PRO_1000010328" description="Imidazoleglycerol-phosphate dehydratase">
    <location>
        <begin position="1"/>
        <end position="197"/>
    </location>
</feature>
<keyword id="KW-0028">Amino-acid biosynthesis</keyword>
<keyword id="KW-0963">Cytoplasm</keyword>
<keyword id="KW-0368">Histidine biosynthesis</keyword>
<keyword id="KW-0456">Lyase</keyword>
<evidence type="ECO:0000255" key="1">
    <source>
        <dbReference type="HAMAP-Rule" id="MF_00076"/>
    </source>
</evidence>
<proteinExistence type="inferred from homology"/>
<sequence length="197" mass="21930">MAERKAYVERNTLETQIKASINLDGTGKARFDIGVPFLEHMLDQIARHGLIDLDIECKGDLAIDDHHTVEDVGITVGQAFSQAIGDKKGIRRYGHAYVPLDEALSRVVIDFSGRPGLQMHVPYTRATVGGFDVDLFQEFFQGFVNHANVTLHIDNLRGTNTHHQIETVFKAFGRALRMAVELDERMAGQMPSTKGVL</sequence>
<protein>
    <recommendedName>
        <fullName evidence="1">Imidazoleglycerol-phosphate dehydratase</fullName>
        <shortName evidence="1">IGPD</shortName>
        <ecNumber evidence="1">4.2.1.19</ecNumber>
    </recommendedName>
</protein>
<comment type="catalytic activity">
    <reaction evidence="1">
        <text>D-erythro-1-(imidazol-4-yl)glycerol 3-phosphate = 3-(imidazol-4-yl)-2-oxopropyl phosphate + H2O</text>
        <dbReference type="Rhea" id="RHEA:11040"/>
        <dbReference type="ChEBI" id="CHEBI:15377"/>
        <dbReference type="ChEBI" id="CHEBI:57766"/>
        <dbReference type="ChEBI" id="CHEBI:58278"/>
        <dbReference type="EC" id="4.2.1.19"/>
    </reaction>
</comment>
<comment type="pathway">
    <text evidence="1">Amino-acid biosynthesis; L-histidine biosynthesis; L-histidine from 5-phospho-alpha-D-ribose 1-diphosphate: step 6/9.</text>
</comment>
<comment type="subcellular location">
    <subcellularLocation>
        <location evidence="1">Cytoplasm</location>
    </subcellularLocation>
</comment>
<comment type="similarity">
    <text evidence="1">Belongs to the imidazoleglycerol-phosphate dehydratase family.</text>
</comment>